<organism>
    <name type="scientific">Bacillus cereus (strain 03BB102)</name>
    <dbReference type="NCBI Taxonomy" id="572264"/>
    <lineage>
        <taxon>Bacteria</taxon>
        <taxon>Bacillati</taxon>
        <taxon>Bacillota</taxon>
        <taxon>Bacilli</taxon>
        <taxon>Bacillales</taxon>
        <taxon>Bacillaceae</taxon>
        <taxon>Bacillus</taxon>
        <taxon>Bacillus cereus group</taxon>
    </lineage>
</organism>
<accession>C1EPP9</accession>
<feature type="chain" id="PRO_1000164726" description="Dihydroorotate dehydrogenase B (NAD(+)), electron transfer subunit">
    <location>
        <begin position="1"/>
        <end position="259"/>
    </location>
</feature>
<feature type="domain" description="FAD-binding FR-type" evidence="1">
    <location>
        <begin position="2"/>
        <end position="102"/>
    </location>
</feature>
<feature type="binding site" evidence="1">
    <location>
        <begin position="53"/>
        <end position="56"/>
    </location>
    <ligand>
        <name>FAD</name>
        <dbReference type="ChEBI" id="CHEBI:57692"/>
    </ligand>
</feature>
<feature type="binding site" evidence="1">
    <location>
        <begin position="70"/>
        <end position="72"/>
    </location>
    <ligand>
        <name>FAD</name>
        <dbReference type="ChEBI" id="CHEBI:57692"/>
    </ligand>
</feature>
<feature type="binding site" evidence="1">
    <location>
        <begin position="77"/>
        <end position="78"/>
    </location>
    <ligand>
        <name>FAD</name>
        <dbReference type="ChEBI" id="CHEBI:57692"/>
    </ligand>
</feature>
<feature type="binding site" evidence="1">
    <location>
        <position position="221"/>
    </location>
    <ligand>
        <name>[2Fe-2S] cluster</name>
        <dbReference type="ChEBI" id="CHEBI:190135"/>
    </ligand>
</feature>
<feature type="binding site" evidence="1">
    <location>
        <position position="226"/>
    </location>
    <ligand>
        <name>[2Fe-2S] cluster</name>
        <dbReference type="ChEBI" id="CHEBI:190135"/>
    </ligand>
</feature>
<feature type="binding site" evidence="1">
    <location>
        <position position="229"/>
    </location>
    <ligand>
        <name>[2Fe-2S] cluster</name>
        <dbReference type="ChEBI" id="CHEBI:190135"/>
    </ligand>
</feature>
<feature type="binding site" evidence="1">
    <location>
        <position position="246"/>
    </location>
    <ligand>
        <name>[2Fe-2S] cluster</name>
        <dbReference type="ChEBI" id="CHEBI:190135"/>
    </ligand>
</feature>
<sequence>MMQKQNMIVVNQKEIAKNIYELVLQGTLVQQMNEPGQFVHIKVAEGIAPLLRRPISICNVDQEKNEFTMLYRAEGQGTKTLATRKQGEMVDVLGPLGHGFPVEEAEAGQTALLVGGGIGVPPLYELSQRLVAKGVRVIHILGFQTKDVVFYEEKFAELGDAYVATVDGTHGTKGFVTDVIDHYGIDFDILYSCGPLAMLRALEGRYKEKKAYISLEERMGCGIGACFACVCHLQEDPSGHSYKKVCSDGPVFPIGEVVL</sequence>
<protein>
    <recommendedName>
        <fullName evidence="1">Dihydroorotate dehydrogenase B (NAD(+)), electron transfer subunit</fullName>
    </recommendedName>
    <alternativeName>
        <fullName evidence="1">Dihydroorotate oxidase B, electron transfer subunit</fullName>
    </alternativeName>
</protein>
<reference key="1">
    <citation type="submission" date="2009-02" db="EMBL/GenBank/DDBJ databases">
        <title>Genome sequence of Bacillus cereus 03BB102.</title>
        <authorList>
            <person name="Dodson R.J."/>
            <person name="Jackson P."/>
            <person name="Munk A.C."/>
            <person name="Brettin T."/>
            <person name="Bruce D."/>
            <person name="Detter C."/>
            <person name="Tapia R."/>
            <person name="Han C."/>
            <person name="Sutton G."/>
            <person name="Sims D."/>
        </authorList>
    </citation>
    <scope>NUCLEOTIDE SEQUENCE [LARGE SCALE GENOMIC DNA]</scope>
    <source>
        <strain>03BB102</strain>
    </source>
</reference>
<keyword id="KW-0001">2Fe-2S</keyword>
<keyword id="KW-0249">Electron transport</keyword>
<keyword id="KW-0274">FAD</keyword>
<keyword id="KW-0285">Flavoprotein</keyword>
<keyword id="KW-0408">Iron</keyword>
<keyword id="KW-0411">Iron-sulfur</keyword>
<keyword id="KW-0479">Metal-binding</keyword>
<keyword id="KW-0665">Pyrimidine biosynthesis</keyword>
<keyword id="KW-0813">Transport</keyword>
<comment type="function">
    <text evidence="1">Responsible for channeling the electrons from the oxidation of dihydroorotate from the FMN redox center in the PyrD type B subunit to the ultimate electron acceptor NAD(+).</text>
</comment>
<comment type="cofactor">
    <cofactor evidence="1">
        <name>[2Fe-2S] cluster</name>
        <dbReference type="ChEBI" id="CHEBI:190135"/>
    </cofactor>
    <text evidence="1">Binds 1 [2Fe-2S] cluster per subunit.</text>
</comment>
<comment type="cofactor">
    <cofactor evidence="1">
        <name>FAD</name>
        <dbReference type="ChEBI" id="CHEBI:57692"/>
    </cofactor>
    <text evidence="1">Binds 1 FAD per subunit.</text>
</comment>
<comment type="pathway">
    <text evidence="1">Pyrimidine metabolism; UMP biosynthesis via de novo pathway; orotate from (S)-dihydroorotate (NAD(+) route): step 1/1.</text>
</comment>
<comment type="subunit">
    <text evidence="1">Heterotetramer of 2 PyrK and 2 PyrD type B subunits.</text>
</comment>
<comment type="similarity">
    <text evidence="1">Belongs to the PyrK family.</text>
</comment>
<proteinExistence type="inferred from homology"/>
<evidence type="ECO:0000255" key="1">
    <source>
        <dbReference type="HAMAP-Rule" id="MF_01211"/>
    </source>
</evidence>
<name>PYRK_BACC3</name>
<dbReference type="EMBL" id="CP001407">
    <property type="protein sequence ID" value="ACO29929.1"/>
    <property type="molecule type" value="Genomic_DNA"/>
</dbReference>
<dbReference type="RefSeq" id="WP_000983357.1">
    <property type="nucleotide sequence ID" value="NZ_CP009318.1"/>
</dbReference>
<dbReference type="SMR" id="C1EPP9"/>
<dbReference type="KEGG" id="bcx:BCA_3986"/>
<dbReference type="PATRIC" id="fig|572264.18.peg.3942"/>
<dbReference type="UniPathway" id="UPA00070">
    <property type="reaction ID" value="UER00945"/>
</dbReference>
<dbReference type="Proteomes" id="UP000002210">
    <property type="component" value="Chromosome"/>
</dbReference>
<dbReference type="GO" id="GO:0051537">
    <property type="term" value="F:2 iron, 2 sulfur cluster binding"/>
    <property type="evidence" value="ECO:0007669"/>
    <property type="project" value="UniProtKB-KW"/>
</dbReference>
<dbReference type="GO" id="GO:0009055">
    <property type="term" value="F:electron transfer activity"/>
    <property type="evidence" value="ECO:0007669"/>
    <property type="project" value="UniProtKB-UniRule"/>
</dbReference>
<dbReference type="GO" id="GO:0050660">
    <property type="term" value="F:flavin adenine dinucleotide binding"/>
    <property type="evidence" value="ECO:0007669"/>
    <property type="project" value="InterPro"/>
</dbReference>
<dbReference type="GO" id="GO:0046872">
    <property type="term" value="F:metal ion binding"/>
    <property type="evidence" value="ECO:0007669"/>
    <property type="project" value="UniProtKB-KW"/>
</dbReference>
<dbReference type="GO" id="GO:0016491">
    <property type="term" value="F:oxidoreductase activity"/>
    <property type="evidence" value="ECO:0007669"/>
    <property type="project" value="InterPro"/>
</dbReference>
<dbReference type="GO" id="GO:0044205">
    <property type="term" value="P:'de novo' UMP biosynthetic process"/>
    <property type="evidence" value="ECO:0007669"/>
    <property type="project" value="UniProtKB-UniRule"/>
</dbReference>
<dbReference type="CDD" id="cd06218">
    <property type="entry name" value="DHOD_e_trans"/>
    <property type="match status" value="1"/>
</dbReference>
<dbReference type="FunFam" id="2.10.240.10:FF:000001">
    <property type="entry name" value="Dihydroorotate dehydrogenase B (NAD(+)), electron transfer subunit"/>
    <property type="match status" value="1"/>
</dbReference>
<dbReference type="FunFam" id="2.40.30.10:FF:000045">
    <property type="entry name" value="Dihydroorotate dehydrogenase B (NAD(+)), electron transfer subunit"/>
    <property type="match status" value="1"/>
</dbReference>
<dbReference type="FunFam" id="3.40.50.80:FF:000017">
    <property type="entry name" value="Dihydroorotate dehydrogenase B (NAD(+)), electron transfer subunit"/>
    <property type="match status" value="1"/>
</dbReference>
<dbReference type="Gene3D" id="2.10.240.10">
    <property type="entry name" value="Dihydroorotate dehydrogenase, electron transfer subunit"/>
    <property type="match status" value="1"/>
</dbReference>
<dbReference type="Gene3D" id="3.40.50.80">
    <property type="entry name" value="Nucleotide-binding domain of ferredoxin-NADP reductase (FNR) module"/>
    <property type="match status" value="1"/>
</dbReference>
<dbReference type="Gene3D" id="2.40.30.10">
    <property type="entry name" value="Translation factors"/>
    <property type="match status" value="1"/>
</dbReference>
<dbReference type="HAMAP" id="MF_01211">
    <property type="entry name" value="DHODB_Fe_S_bind"/>
    <property type="match status" value="1"/>
</dbReference>
<dbReference type="InterPro" id="IPR012165">
    <property type="entry name" value="Cyt_c3_hydrogenase_gsu"/>
</dbReference>
<dbReference type="InterPro" id="IPR037117">
    <property type="entry name" value="Dihydroorotate_DH_ele_sf"/>
</dbReference>
<dbReference type="InterPro" id="IPR019480">
    <property type="entry name" value="Dihydroorotate_DH_Fe-S-bd"/>
</dbReference>
<dbReference type="InterPro" id="IPR023455">
    <property type="entry name" value="Dihydroorotate_DHASE_ETsu"/>
</dbReference>
<dbReference type="InterPro" id="IPR017927">
    <property type="entry name" value="FAD-bd_FR_type"/>
</dbReference>
<dbReference type="InterPro" id="IPR039261">
    <property type="entry name" value="FNR_nucleotide-bd"/>
</dbReference>
<dbReference type="InterPro" id="IPR001433">
    <property type="entry name" value="OxRdtase_FAD/NAD-bd"/>
</dbReference>
<dbReference type="InterPro" id="IPR050353">
    <property type="entry name" value="PyrK_electron_transfer"/>
</dbReference>
<dbReference type="InterPro" id="IPR017938">
    <property type="entry name" value="Riboflavin_synthase-like_b-brl"/>
</dbReference>
<dbReference type="NCBIfam" id="NF000797">
    <property type="entry name" value="PRK00054.1-2"/>
    <property type="match status" value="1"/>
</dbReference>
<dbReference type="NCBIfam" id="NF000799">
    <property type="entry name" value="PRK00054.1-4"/>
    <property type="match status" value="1"/>
</dbReference>
<dbReference type="PANTHER" id="PTHR43513">
    <property type="entry name" value="DIHYDROOROTATE DEHYDROGENASE B (NAD(+)), ELECTRON TRANSFER SUBUNIT"/>
    <property type="match status" value="1"/>
</dbReference>
<dbReference type="PANTHER" id="PTHR43513:SF3">
    <property type="entry name" value="DIHYDROOROTATE DEHYDROGENASE B (NAD(+)), ELECTRON TRANSFER SUBUNIT-RELATED"/>
    <property type="match status" value="1"/>
</dbReference>
<dbReference type="Pfam" id="PF10418">
    <property type="entry name" value="DHODB_Fe-S_bind"/>
    <property type="match status" value="1"/>
</dbReference>
<dbReference type="Pfam" id="PF00175">
    <property type="entry name" value="NAD_binding_1"/>
    <property type="match status" value="1"/>
</dbReference>
<dbReference type="PIRSF" id="PIRSF006816">
    <property type="entry name" value="Cyc3_hyd_g"/>
    <property type="match status" value="1"/>
</dbReference>
<dbReference type="PRINTS" id="PR00409">
    <property type="entry name" value="PHDIOXRDTASE"/>
</dbReference>
<dbReference type="SUPFAM" id="SSF52343">
    <property type="entry name" value="Ferredoxin reductase-like, C-terminal NADP-linked domain"/>
    <property type="match status" value="1"/>
</dbReference>
<dbReference type="SUPFAM" id="SSF63380">
    <property type="entry name" value="Riboflavin synthase domain-like"/>
    <property type="match status" value="1"/>
</dbReference>
<dbReference type="PROSITE" id="PS51384">
    <property type="entry name" value="FAD_FR"/>
    <property type="match status" value="1"/>
</dbReference>
<gene>
    <name evidence="1" type="primary">pyrK</name>
    <name type="ordered locus">BCA_3986</name>
</gene>